<name>MCR1_COCIM</name>
<sequence length="325" mass="36509">MFARFTFRTCRPAGQAIRKYASEASPKPSSNVPLYGGLALAAGGAYYYWQRQQSPQALEAALKERSKVFIGGDQGWVDLKLAGIETLSHNVKRFRFEFPDSESVSGLHIASALLTKYKGPKDEKPTIRPYTPVSEEEQPGYLDLVVKQYPNGPMSTHLHNMAVGQQLSFKGPIPKYPWEQNKHDHICMIAGGTGITPMYQIIRKIFNNPNDKTKVTLVFGNITEEDILLKKELDILENTYPRRFRAFYLLDKPPAGWTQGTGYVTKELLKTVLPEPKTENIKIFVCGPPGMYKAVSGPKNSPKDQGELTGLLKELGYDKDQVYKF</sequence>
<protein>
    <recommendedName>
        <fullName>NADH-cytochrome b5 reductase 2</fullName>
        <ecNumber>1.6.2.2</ecNumber>
    </recommendedName>
    <alternativeName>
        <fullName>Mitochondrial cytochrome b reductase</fullName>
    </alternativeName>
</protein>
<feature type="chain" id="PRO_0000330179" description="NADH-cytochrome b5 reductase 2">
    <location>
        <begin position="1"/>
        <end position="325"/>
    </location>
</feature>
<feature type="transmembrane region" description="Helical" evidence="2">
    <location>
        <begin position="32"/>
        <end position="48"/>
    </location>
</feature>
<feature type="domain" description="FAD-binding FR-type" evidence="3">
    <location>
        <begin position="74"/>
        <end position="179"/>
    </location>
</feature>
<feature type="binding site" evidence="1">
    <location>
        <begin position="182"/>
        <end position="217"/>
    </location>
    <ligand>
        <name>FAD</name>
        <dbReference type="ChEBI" id="CHEBI:57692"/>
    </ligand>
</feature>
<dbReference type="EC" id="1.6.2.2"/>
<dbReference type="EMBL" id="GG704914">
    <property type="protein sequence ID" value="EAS33908.3"/>
    <property type="molecule type" value="Genomic_DNA"/>
</dbReference>
<dbReference type="RefSeq" id="XP_001245491.2">
    <property type="nucleotide sequence ID" value="XM_001245490.2"/>
</dbReference>
<dbReference type="SMR" id="Q1DXN1"/>
<dbReference type="FunCoup" id="Q1DXN1">
    <property type="interactions" value="299"/>
</dbReference>
<dbReference type="STRING" id="246410.Q1DXN1"/>
<dbReference type="GeneID" id="4564902"/>
<dbReference type="KEGG" id="cim:CIMG_04932"/>
<dbReference type="VEuPathDB" id="FungiDB:CIMG_04932"/>
<dbReference type="InParanoid" id="Q1DXN1"/>
<dbReference type="OMA" id="KGPEMQK"/>
<dbReference type="OrthoDB" id="432685at2759"/>
<dbReference type="Proteomes" id="UP000001261">
    <property type="component" value="Unassembled WGS sequence"/>
</dbReference>
<dbReference type="GO" id="GO:0005741">
    <property type="term" value="C:mitochondrial outer membrane"/>
    <property type="evidence" value="ECO:0007669"/>
    <property type="project" value="UniProtKB-SubCell"/>
</dbReference>
<dbReference type="GO" id="GO:0004128">
    <property type="term" value="F:cytochrome-b5 reductase activity, acting on NAD(P)H"/>
    <property type="evidence" value="ECO:0007669"/>
    <property type="project" value="UniProtKB-EC"/>
</dbReference>
<dbReference type="GO" id="GO:0006696">
    <property type="term" value="P:ergosterol biosynthetic process"/>
    <property type="evidence" value="ECO:0007669"/>
    <property type="project" value="TreeGrafter"/>
</dbReference>
<dbReference type="CDD" id="cd06183">
    <property type="entry name" value="cyt_b5_reduct_like"/>
    <property type="match status" value="1"/>
</dbReference>
<dbReference type="FunFam" id="2.40.30.10:FF:000032">
    <property type="entry name" value="NADH-cytochrome b5 reductase"/>
    <property type="match status" value="1"/>
</dbReference>
<dbReference type="FunFam" id="3.40.50.80:FF:000009">
    <property type="entry name" value="NADH-cytochrome b5 reductase"/>
    <property type="match status" value="1"/>
</dbReference>
<dbReference type="Gene3D" id="3.40.50.80">
    <property type="entry name" value="Nucleotide-binding domain of ferredoxin-NADP reductase (FNR) module"/>
    <property type="match status" value="1"/>
</dbReference>
<dbReference type="Gene3D" id="2.40.30.10">
    <property type="entry name" value="Translation factors"/>
    <property type="match status" value="1"/>
</dbReference>
<dbReference type="InterPro" id="IPR001834">
    <property type="entry name" value="CBR-like"/>
</dbReference>
<dbReference type="InterPro" id="IPR008333">
    <property type="entry name" value="Cbr1-like_FAD-bd_dom"/>
</dbReference>
<dbReference type="InterPro" id="IPR017927">
    <property type="entry name" value="FAD-bd_FR_type"/>
</dbReference>
<dbReference type="InterPro" id="IPR001709">
    <property type="entry name" value="Flavoprot_Pyr_Nucl_cyt_Rdtase"/>
</dbReference>
<dbReference type="InterPro" id="IPR039261">
    <property type="entry name" value="FNR_nucleotide-bd"/>
</dbReference>
<dbReference type="InterPro" id="IPR001433">
    <property type="entry name" value="OxRdtase_FAD/NAD-bd"/>
</dbReference>
<dbReference type="InterPro" id="IPR017938">
    <property type="entry name" value="Riboflavin_synthase-like_b-brl"/>
</dbReference>
<dbReference type="PANTHER" id="PTHR19370">
    <property type="entry name" value="NADH-CYTOCHROME B5 REDUCTASE"/>
    <property type="match status" value="1"/>
</dbReference>
<dbReference type="PANTHER" id="PTHR19370:SF171">
    <property type="entry name" value="NADH-CYTOCHROME B5 REDUCTASE 2"/>
    <property type="match status" value="1"/>
</dbReference>
<dbReference type="Pfam" id="PF00970">
    <property type="entry name" value="FAD_binding_6"/>
    <property type="match status" value="1"/>
</dbReference>
<dbReference type="Pfam" id="PF00175">
    <property type="entry name" value="NAD_binding_1"/>
    <property type="match status" value="1"/>
</dbReference>
<dbReference type="PRINTS" id="PR00406">
    <property type="entry name" value="CYTB5RDTASE"/>
</dbReference>
<dbReference type="PRINTS" id="PR00371">
    <property type="entry name" value="FPNCR"/>
</dbReference>
<dbReference type="SUPFAM" id="SSF52343">
    <property type="entry name" value="Ferredoxin reductase-like, C-terminal NADP-linked domain"/>
    <property type="match status" value="1"/>
</dbReference>
<dbReference type="SUPFAM" id="SSF63380">
    <property type="entry name" value="Riboflavin synthase domain-like"/>
    <property type="match status" value="1"/>
</dbReference>
<dbReference type="PROSITE" id="PS51384">
    <property type="entry name" value="FAD_FR"/>
    <property type="match status" value="1"/>
</dbReference>
<proteinExistence type="inferred from homology"/>
<accession>Q1DXN1</accession>
<accession>J3KF20</accession>
<comment type="function">
    <text evidence="1">May mediate the reduction of outer membrane cytochrome b5.</text>
</comment>
<comment type="catalytic activity">
    <reaction>
        <text>2 Fe(III)-[cytochrome b5] + NADH = 2 Fe(II)-[cytochrome b5] + NAD(+) + H(+)</text>
        <dbReference type="Rhea" id="RHEA:46680"/>
        <dbReference type="Rhea" id="RHEA-COMP:10438"/>
        <dbReference type="Rhea" id="RHEA-COMP:10439"/>
        <dbReference type="ChEBI" id="CHEBI:15378"/>
        <dbReference type="ChEBI" id="CHEBI:29033"/>
        <dbReference type="ChEBI" id="CHEBI:29034"/>
        <dbReference type="ChEBI" id="CHEBI:57540"/>
        <dbReference type="ChEBI" id="CHEBI:57945"/>
        <dbReference type="EC" id="1.6.2.2"/>
    </reaction>
</comment>
<comment type="cofactor">
    <cofactor evidence="1">
        <name>FAD</name>
        <dbReference type="ChEBI" id="CHEBI:57692"/>
    </cofactor>
</comment>
<comment type="subcellular location">
    <subcellularLocation>
        <location evidence="1">Mitochondrion outer membrane</location>
        <topology evidence="1">Single-pass membrane protein</topology>
    </subcellularLocation>
</comment>
<comment type="similarity">
    <text evidence="4">Belongs to the flavoprotein pyridine nucleotide cytochrome reductase family.</text>
</comment>
<gene>
    <name type="primary">MCR1</name>
    <name type="ORF">CIMG_04932</name>
</gene>
<evidence type="ECO:0000250" key="1"/>
<evidence type="ECO:0000255" key="2"/>
<evidence type="ECO:0000255" key="3">
    <source>
        <dbReference type="PROSITE-ProRule" id="PRU00716"/>
    </source>
</evidence>
<evidence type="ECO:0000305" key="4"/>
<keyword id="KW-0274">FAD</keyword>
<keyword id="KW-0285">Flavoprotein</keyword>
<keyword id="KW-0472">Membrane</keyword>
<keyword id="KW-0496">Mitochondrion</keyword>
<keyword id="KW-1000">Mitochondrion outer membrane</keyword>
<keyword id="KW-0520">NAD</keyword>
<keyword id="KW-0560">Oxidoreductase</keyword>
<keyword id="KW-1185">Reference proteome</keyword>
<keyword id="KW-0812">Transmembrane</keyword>
<keyword id="KW-1133">Transmembrane helix</keyword>
<reference key="1">
    <citation type="journal article" date="2009" name="Genome Res.">
        <title>Comparative genomic analyses of the human fungal pathogens Coccidioides and their relatives.</title>
        <authorList>
            <person name="Sharpton T.J."/>
            <person name="Stajich J.E."/>
            <person name="Rounsley S.D."/>
            <person name="Gardner M.J."/>
            <person name="Wortman J.R."/>
            <person name="Jordar V.S."/>
            <person name="Maiti R."/>
            <person name="Kodira C.D."/>
            <person name="Neafsey D.E."/>
            <person name="Zeng Q."/>
            <person name="Hung C.-Y."/>
            <person name="McMahan C."/>
            <person name="Muszewska A."/>
            <person name="Grynberg M."/>
            <person name="Mandel M.A."/>
            <person name="Kellner E.M."/>
            <person name="Barker B.M."/>
            <person name="Galgiani J.N."/>
            <person name="Orbach M.J."/>
            <person name="Kirkland T.N."/>
            <person name="Cole G.T."/>
            <person name="Henn M.R."/>
            <person name="Birren B.W."/>
            <person name="Taylor J.W."/>
        </authorList>
    </citation>
    <scope>NUCLEOTIDE SEQUENCE [LARGE SCALE GENOMIC DNA]</scope>
    <source>
        <strain>RS</strain>
    </source>
</reference>
<reference key="2">
    <citation type="journal article" date="2010" name="Genome Res.">
        <title>Population genomic sequencing of Coccidioides fungi reveals recent hybridization and transposon control.</title>
        <authorList>
            <person name="Neafsey D.E."/>
            <person name="Barker B.M."/>
            <person name="Sharpton T.J."/>
            <person name="Stajich J.E."/>
            <person name="Park D.J."/>
            <person name="Whiston E."/>
            <person name="Hung C.-Y."/>
            <person name="McMahan C."/>
            <person name="White J."/>
            <person name="Sykes S."/>
            <person name="Heiman D."/>
            <person name="Young S."/>
            <person name="Zeng Q."/>
            <person name="Abouelleil A."/>
            <person name="Aftuck L."/>
            <person name="Bessette D."/>
            <person name="Brown A."/>
            <person name="FitzGerald M."/>
            <person name="Lui A."/>
            <person name="Macdonald J.P."/>
            <person name="Priest M."/>
            <person name="Orbach M.J."/>
            <person name="Galgiani J.N."/>
            <person name="Kirkland T.N."/>
            <person name="Cole G.T."/>
            <person name="Birren B.W."/>
            <person name="Henn M.R."/>
            <person name="Taylor J.W."/>
            <person name="Rounsley S.D."/>
        </authorList>
    </citation>
    <scope>GENOME REANNOTATION</scope>
    <source>
        <strain>RS</strain>
    </source>
</reference>
<organism>
    <name type="scientific">Coccidioides immitis (strain RS)</name>
    <name type="common">Valley fever fungus</name>
    <dbReference type="NCBI Taxonomy" id="246410"/>
    <lineage>
        <taxon>Eukaryota</taxon>
        <taxon>Fungi</taxon>
        <taxon>Dikarya</taxon>
        <taxon>Ascomycota</taxon>
        <taxon>Pezizomycotina</taxon>
        <taxon>Eurotiomycetes</taxon>
        <taxon>Eurotiomycetidae</taxon>
        <taxon>Onygenales</taxon>
        <taxon>Onygenaceae</taxon>
        <taxon>Coccidioides</taxon>
    </lineage>
</organism>